<organism>
    <name type="scientific">Rickettsia prowazekii (strain Madrid E)</name>
    <dbReference type="NCBI Taxonomy" id="272947"/>
    <lineage>
        <taxon>Bacteria</taxon>
        <taxon>Pseudomonadati</taxon>
        <taxon>Pseudomonadota</taxon>
        <taxon>Alphaproteobacteria</taxon>
        <taxon>Rickettsiales</taxon>
        <taxon>Rickettsiaceae</taxon>
        <taxon>Rickettsieae</taxon>
        <taxon>Rickettsia</taxon>
        <taxon>typhus group</taxon>
    </lineage>
</organism>
<sequence>MHKLLLIITVFFTFNVAQASLTSIVASVNDKPITLNEFHARKKMIMALNNIENLTADQDKQLNDLAINSLIDESLLFQYAGDREIPQDEIDNAIKSIEDRNKMAHGSLLQYLKNKSVNPESFILQIKSELIKMNILSSLSRSVQVSNKEIDVAILSSDQKDVEILMQVFRSKDGSNKAFTKMNHLKNRLKKCSDVKRTLYDKFATMQIITSKLSNIEGVKQTIVKDLIPDKASNVFEVNNKFEIILVCSKKILNVNADENNYVVNFLTNKKISQKAQKIFKNMRKKAAIRIMFPS</sequence>
<reference key="1">
    <citation type="journal article" date="1997" name="Microbiology">
        <title>Genomic rearrangements during evolution of the obligate intracellular parasite Rickettsia prowazekii as inferred from an analysis of 52015 bp nucleotide sequence.</title>
        <authorList>
            <person name="Andersson J.O."/>
            <person name="Andersson S.G.E."/>
        </authorList>
    </citation>
    <scope>NUCLEOTIDE SEQUENCE [GENOMIC DNA]</scope>
    <source>
        <strain>Madrid E</strain>
    </source>
</reference>
<reference key="2">
    <citation type="journal article" date="1998" name="Nature">
        <title>The genome sequence of Rickettsia prowazekii and the origin of mitochondria.</title>
        <authorList>
            <person name="Andersson S.G.E."/>
            <person name="Zomorodipour A."/>
            <person name="Andersson J.O."/>
            <person name="Sicheritz-Ponten T."/>
            <person name="Alsmark U.C.M."/>
            <person name="Podowski R.M."/>
            <person name="Naeslund A.K."/>
            <person name="Eriksson A.-S."/>
            <person name="Winkler H.H."/>
            <person name="Kurland C.G."/>
        </authorList>
    </citation>
    <scope>NUCLEOTIDE SEQUENCE [LARGE SCALE GENOMIC DNA]</scope>
    <source>
        <strain>Madrid E</strain>
    </source>
</reference>
<feature type="signal peptide" evidence="1">
    <location>
        <begin position="1"/>
        <end position="19"/>
    </location>
</feature>
<feature type="chain" id="PRO_0000101406" description="Uncharacterized protein RP673">
    <location>
        <begin position="20"/>
        <end position="295"/>
    </location>
</feature>
<evidence type="ECO:0000255" key="1"/>
<keyword id="KW-1185">Reference proteome</keyword>
<keyword id="KW-0732">Signal</keyword>
<protein>
    <recommendedName>
        <fullName>Uncharacterized protein RP673</fullName>
    </recommendedName>
</protein>
<accession>O05951</accession>
<proteinExistence type="inferred from homology"/>
<name>Y673_RICPR</name>
<gene>
    <name type="ordered locus">RP673</name>
</gene>
<dbReference type="EMBL" id="Y11786">
    <property type="protein sequence ID" value="CAA72481.1"/>
    <property type="molecule type" value="Genomic_DNA"/>
</dbReference>
<dbReference type="EMBL" id="AJ235272">
    <property type="protein sequence ID" value="CAA15110.1"/>
    <property type="molecule type" value="Genomic_DNA"/>
</dbReference>
<dbReference type="PIR" id="D71673">
    <property type="entry name" value="D71673"/>
</dbReference>
<dbReference type="RefSeq" id="NP_221034.1">
    <property type="nucleotide sequence ID" value="NC_000963.1"/>
</dbReference>
<dbReference type="RefSeq" id="WP_004596344.1">
    <property type="nucleotide sequence ID" value="NC_000963.1"/>
</dbReference>
<dbReference type="SMR" id="O05951"/>
<dbReference type="STRING" id="272947.gene:17555750"/>
<dbReference type="EnsemblBacteria" id="CAA15110">
    <property type="protein sequence ID" value="CAA15110"/>
    <property type="gene ID" value="CAA15110"/>
</dbReference>
<dbReference type="KEGG" id="rpr:RP673"/>
<dbReference type="PATRIC" id="fig|272947.5.peg.694"/>
<dbReference type="HOGENOM" id="CLU_942947_0_0_5"/>
<dbReference type="OrthoDB" id="9791746at2"/>
<dbReference type="Proteomes" id="UP000002480">
    <property type="component" value="Chromosome"/>
</dbReference>
<dbReference type="Gene3D" id="1.10.4030.10">
    <property type="entry name" value="Porin chaperone SurA, peptide-binding domain"/>
    <property type="match status" value="1"/>
</dbReference>
<dbReference type="InterPro" id="IPR050280">
    <property type="entry name" value="OMP_Chaperone_SurA"/>
</dbReference>
<dbReference type="InterPro" id="IPR027304">
    <property type="entry name" value="Trigger_fact/SurA_dom_sf"/>
</dbReference>
<dbReference type="PANTHER" id="PTHR47637">
    <property type="entry name" value="CHAPERONE SURA"/>
    <property type="match status" value="1"/>
</dbReference>
<dbReference type="PANTHER" id="PTHR47637:SF1">
    <property type="entry name" value="CHAPERONE SURA"/>
    <property type="match status" value="1"/>
</dbReference>
<dbReference type="Pfam" id="PF13624">
    <property type="entry name" value="SurA_N_3"/>
    <property type="match status" value="1"/>
</dbReference>
<dbReference type="SUPFAM" id="SSF109998">
    <property type="entry name" value="Triger factor/SurA peptide-binding domain-like"/>
    <property type="match status" value="1"/>
</dbReference>